<proteinExistence type="evidence at protein level"/>
<sequence length="953" mass="106713">MSSGLWNQEKVTSPYWEERLFYLLLQECSVTDKQTQKLLRVPKGSIGQYIQDRSVGHSRVPSAKGKKNQIGLKILEQPHAVLFVDEKDVVEINEKFTELLLAITNCEERLSLFRNRIRLSKGLQVDVGSPVRVQLRSGEEKFPGVVRFRGPLLAERTVSGIFFGVELLEEGRGQGFTDGVYQGKQLFQCDEDCGVFVALDKLELIEDDDNGLESDFAGPGDTVQVEPPPLEINSRVSLKVGESTESGTVIFCDVLPGKESLGYFVGVDMDNPIGNWDGRFDGVQLCSFASVESTVLLHINDIIPDSVTQERRPPKLAFMSRGVGDKGSSSHNKPKVTGSTSDPGSRNRSELFYTLNGSSVDSQQQSKSKNPWYIDEVAEDPAKSLTEMSSDFGHSSPPPQPPSMNSLSSENRFHSLPFSLTKMPNTNGSMAHSPLSLSVQSVMGELNSTPVQESPPMPSSSGNAHGLEVGSLAEVKENPPFYGVIRWIGQPPGLSDVLAGLELEDECAGCTDGTFRGTRYFTCALKKALFVKLKSCRPDSRFASLQPVSNQIERCNSLAFGGYLSEVVEENTPPKMEKEGLEIMIGKKKGIQGHYNSCYLDSTLFCLFAFSSALDTVLLRPKEKNDVEYYSETQELLRTEIVNPLRIYGYVCATKIMKLRKILEKVEAASGFTSEEKDPEEFLNILFHDILRVEPLLKIRSAGQKVQDCNFYQIFMEKNEKVGVPTIQQLLEWSFINSNLKFAEAPSCLIIQMPRFGKDFKLFKKIFPSLELNITDLLEDTPRQCRICGGLAMYECRECYDDPDISAGKIKQFCKTCSTQVHLHPRRLNHTYHPVSLPKDLPDWDWRHGCIPCQKMELFAVLCIETSHYVAFVKYGKDDSAWLFFDSMADRDGGQNGFNIPQVTPCPEVGEYLKMSLEDLHSLDSRRIQGCARRLLCDAYMCMYQSPTMSLYK</sequence>
<comment type="function">
    <text evidence="1 2">Deubiquitinase that specifically cleaves 'Lys-63'- and linear 'Met-1'-linked polyubiquitin chains and is involved in NF-kappa-B activation and TNF-alpha-induced necroptosis. Negatively regulates NF-kappa-B activation by deubiquitinating upstream signaling factors. Contributes to the regulation of cell survival, proliferation and differentiation via its effects on NF-kappa-B activation. Negative regulator of Wnt signaling. Inhibits HDAC6 and thereby promotes acetylation of alpha-tubulin and stabilization of microtubules. Plays a role in the regulation of microtubule dynamics, and thereby contributes to the regulation of cell proliferation, cell polarization, cell migration, and angiogenesis. Required for normal cell cycle progress and normal cytokinesis. Inhibits nuclear translocation of NF-kappa-B. Plays a role in the regulation of inflammation and the innate immune response, via its effects on NF-kappa-B activation (By similarity). Dispensable for the maturation of intrathymic natural killer cells, but required for the continued survival of immature natural killer cells. Negatively regulates TNFRSF11A signaling and osteoclastogenesis. Involved in the regulation of ciliogenesis, allowing ciliary basal bodies to migrate and dock to the plasma membrane; this process does not depend on NF-kappa-B activation (By similarity). Ability to remove linear ('Met-1'-linked) polyubiquitin chains regulates innate immunity and TNF-alpha-induced necroptosis: recruited to the LUBAC complex via interaction with SPATA2 and restricts linear polyubiquitin formation on target proteins. Regulates innate immunity by restricting linear polyubiquitin formation on RIPK2 in response to NOD2 stimulation (By similarity). Involved in TNF-alpha-induced necroptosis by removing linear ('Met-1'-linked) polyubiquitin chains from RIPK1, thereby regulating the kinase activity of RIPK1 (By similarity). Negatively regulates intestinal inflammation by removing 'Lys-63' linked polyubiquitin chain of NLRP6, thereby reducing the interaction between NLRP6 and PYCARD/ASC and formation of the NLRP6 inflammasome (By similarity). Does not catalyze deubiquitination of heterotypic 'Lys-63'-/'Lys-48'-linked branched ubiquitin chains (By similarity). Removes 'Lys-63' linked polyubiquitin chain of MAP3K7, which inhibits phosphorylation and blocks downstream activation of the JNK-p38 kinase cascades (By similarity). Also removes 'Lys-63'-linked polyubiquitin chains of MAP3K1 and MA3P3K3, which inhibit their interaction with MAP2K1 and MAP2K2 (By similarity).</text>
</comment>
<comment type="catalytic activity">
    <reaction evidence="2">
        <text>Thiol-dependent hydrolysis of ester, thioester, amide, peptide and isopeptide bonds formed by the C-terminal Gly of ubiquitin (a 76-residue protein attached to proteins as an intracellular targeting signal).</text>
        <dbReference type="EC" id="3.4.19.12"/>
    </reaction>
</comment>
<comment type="subunit">
    <text evidence="1 2">Interacts (via CAP-Gly domain) with IKBKG/NEMO (via proline-rich C-terminal region). Interacts with TRAF2 and TRIP. Interacts with PLK1, DVL1, DVL3, MAVS, TBK1, IKKE and RIGI. Interacts (via CAP-Gly domain) with microtubules. Interacts with HDAC6 and BCL3 (By similarity). Interacts with MAP3K7. Identified in a complex with TRAF6 and SQSTM1 (By similarity). Interacts with OPTN and SQSTM1 (By similarity). Interacts with CEP350. Interacts with RNF31; the interaction is indirect and is mediated via SPATA2. Interacts with SPATA2 (via the PUB domain); the interaction is direct and recruits CYLD to the LUBAC complex, thereby regulating TNF-alpha-induced necroptosis (By similarity).</text>
</comment>
<comment type="subcellular location">
    <subcellularLocation>
        <location>Cytoplasm</location>
    </subcellularLocation>
    <subcellularLocation>
        <location>Cytoplasm</location>
        <location>Perinuclear region</location>
    </subcellularLocation>
    <subcellularLocation>
        <location>Cytoplasm</location>
        <location>Cytoskeleton</location>
    </subcellularLocation>
    <subcellularLocation>
        <location evidence="2">Cell membrane</location>
        <topology evidence="2">Peripheral membrane protein</topology>
        <orientation evidence="2">Cytoplasmic side</orientation>
    </subcellularLocation>
    <subcellularLocation>
        <location evidence="2">Cytoplasm</location>
        <location evidence="2">Cytoskeleton</location>
        <location evidence="2">Microtubule organizing center</location>
        <location evidence="2">Centrosome</location>
    </subcellularLocation>
    <subcellularLocation>
        <location evidence="2">Cytoplasm</location>
        <location evidence="2">Cytoskeleton</location>
        <location evidence="2">Spindle</location>
    </subcellularLocation>
    <subcellularLocation>
        <location evidence="1">Cytoplasm</location>
        <location evidence="1">Cytoskeleton</location>
        <location evidence="1">Cilium basal body</location>
    </subcellularLocation>
    <text evidence="1 2">Detected at the microtubule cytoskeleton during interphase (By similarity). Detected at the midbody during telophase (By similarity). During metaphase, it remains localized to the centrosome but is also present along the spindle (By similarity).</text>
</comment>
<comment type="PTM">
    <text evidence="2">Phosphorylated on several serine residues by IKKA and/or IKKB in response to immune stimuli. Phosphorylation requires IKBKG. Phosphorylation abolishes TRAF2 deubiquitination, interferes with the activation of Jun kinases, and strongly reduces CD40-dependent gene activation by NF-kappa-B (By similarity).</text>
</comment>
<comment type="PTM">
    <text evidence="1 2">Ubiquitinated. Polyubiquitinated in hepatocytes treated with palmitic acid. Ubiquitination is mediated by E3 ligase TRIM47 and leads to proteasomal degradation.</text>
</comment>
<comment type="similarity">
    <text evidence="6">Belongs to the peptidase C19 family.</text>
</comment>
<keyword id="KW-1003">Cell membrane</keyword>
<keyword id="KW-0966">Cell projection</keyword>
<keyword id="KW-0963">Cytoplasm</keyword>
<keyword id="KW-0206">Cytoskeleton</keyword>
<keyword id="KW-0378">Hydrolase</keyword>
<keyword id="KW-0391">Immunity</keyword>
<keyword id="KW-0399">Innate immunity</keyword>
<keyword id="KW-0472">Membrane</keyword>
<keyword id="KW-0479">Metal-binding</keyword>
<keyword id="KW-0493">Microtubule</keyword>
<keyword id="KW-0597">Phosphoprotein</keyword>
<keyword id="KW-0645">Protease</keyword>
<keyword id="KW-1185">Reference proteome</keyword>
<keyword id="KW-0677">Repeat</keyword>
<keyword id="KW-0788">Thiol protease</keyword>
<keyword id="KW-0832">Ubl conjugation</keyword>
<keyword id="KW-0833">Ubl conjugation pathway</keyword>
<keyword id="KW-0879">Wnt signaling pathway</keyword>
<keyword id="KW-0862">Zinc</keyword>
<feature type="chain" id="PRO_0000326149" description="Ubiquitin carboxyl-terminal hydrolase CYLD">
    <location>
        <begin position="1"/>
        <end position="953"/>
    </location>
</feature>
<feature type="domain" description="CAP-Gly 1" evidence="3">
    <location>
        <begin position="153"/>
        <end position="198"/>
    </location>
</feature>
<feature type="domain" description="CAP-Gly 2" evidence="3">
    <location>
        <begin position="253"/>
        <end position="286"/>
    </location>
</feature>
<feature type="domain" description="CAP-Gly 3" evidence="3">
    <location>
        <begin position="489"/>
        <end position="532"/>
    </location>
</feature>
<feature type="domain" description="USP">
    <location>
        <begin position="589"/>
        <end position="947"/>
    </location>
</feature>
<feature type="region of interest" description="Interaction with TRIP" evidence="2">
    <location>
        <begin position="106"/>
        <end position="590"/>
    </location>
</feature>
<feature type="region of interest" description="Disordered" evidence="5">
    <location>
        <begin position="318"/>
        <end position="350"/>
    </location>
</feature>
<feature type="region of interest" description="Disordered" evidence="5">
    <location>
        <begin position="387"/>
        <end position="410"/>
    </location>
</feature>
<feature type="region of interest" description="Interaction with TRAF2" evidence="2">
    <location>
        <begin position="391"/>
        <end position="466"/>
    </location>
</feature>
<feature type="region of interest" description="Interaction with IKBKG/NEMO" evidence="2">
    <location>
        <begin position="467"/>
        <end position="681"/>
    </location>
</feature>
<feature type="region of interest" description="B-box" evidence="2">
    <location>
        <begin position="778"/>
        <end position="830"/>
    </location>
</feature>
<feature type="compositionally biased region" description="Polar residues" evidence="5">
    <location>
        <begin position="327"/>
        <end position="346"/>
    </location>
</feature>
<feature type="active site" description="Nucleophile" evidence="4">
    <location>
        <position position="598"/>
    </location>
</feature>
<feature type="active site" description="Proton acceptor" evidence="4">
    <location>
        <position position="868"/>
    </location>
</feature>
<feature type="binding site" evidence="2">
    <location>
        <position position="785"/>
    </location>
    <ligand>
        <name>Zn(2+)</name>
        <dbReference type="ChEBI" id="CHEBI:29105"/>
        <label>1</label>
    </ligand>
</feature>
<feature type="binding site" evidence="2">
    <location>
        <position position="788"/>
    </location>
    <ligand>
        <name>Zn(2+)</name>
        <dbReference type="ChEBI" id="CHEBI:29105"/>
        <label>1</label>
    </ligand>
</feature>
<feature type="binding site" evidence="2">
    <location>
        <position position="796"/>
    </location>
    <ligand>
        <name>Zn(2+)</name>
        <dbReference type="ChEBI" id="CHEBI:29105"/>
        <label>2</label>
    </ligand>
</feature>
<feature type="binding site" evidence="2">
    <location>
        <position position="799"/>
    </location>
    <ligand>
        <name>Zn(2+)</name>
        <dbReference type="ChEBI" id="CHEBI:29105"/>
        <label>2</label>
    </ligand>
</feature>
<feature type="binding site" evidence="2">
    <location>
        <position position="814"/>
    </location>
    <ligand>
        <name>Zn(2+)</name>
        <dbReference type="ChEBI" id="CHEBI:29105"/>
        <label>1</label>
    </ligand>
</feature>
<feature type="binding site" evidence="2">
    <location>
        <position position="817"/>
    </location>
    <ligand>
        <name>Zn(2+)</name>
        <dbReference type="ChEBI" id="CHEBI:29105"/>
        <label>1</label>
    </ligand>
</feature>
<feature type="binding site" evidence="2">
    <location>
        <position position="822"/>
    </location>
    <ligand>
        <name>Zn(2+)</name>
        <dbReference type="ChEBI" id="CHEBI:29105"/>
        <label>2</label>
    </ligand>
</feature>
<feature type="binding site" evidence="2">
    <location>
        <position position="830"/>
    </location>
    <ligand>
        <name>Zn(2+)</name>
        <dbReference type="ChEBI" id="CHEBI:29105"/>
        <label>2</label>
    </ligand>
</feature>
<feature type="modified residue" description="Phosphoserine" evidence="2">
    <location>
        <position position="384"/>
    </location>
</feature>
<feature type="modified residue" description="Phosphoserine" evidence="7">
    <location>
        <position position="415"/>
    </location>
</feature>
<feature type="modified residue" description="Phosphoserine" evidence="7">
    <location>
        <position position="419"/>
    </location>
</feature>
<gene>
    <name type="primary">Cyld</name>
    <name type="synonym">Cyld1</name>
</gene>
<protein>
    <recommendedName>
        <fullName>Ubiquitin carboxyl-terminal hydrolase CYLD</fullName>
        <ecNumber evidence="2">3.4.19.12</ecNumber>
    </recommendedName>
    <alternativeName>
        <fullName>Deubiquitinating enzyme CYLD</fullName>
    </alternativeName>
    <alternativeName>
        <fullName>Ubiquitin thioesterase CYLD</fullName>
    </alternativeName>
    <alternativeName>
        <fullName>Ubiquitin-specific-processing protease CYLD</fullName>
    </alternativeName>
</protein>
<evidence type="ECO:0000250" key="1">
    <source>
        <dbReference type="UniProtKB" id="Q80TQ2"/>
    </source>
</evidence>
<evidence type="ECO:0000250" key="2">
    <source>
        <dbReference type="UniProtKB" id="Q9NQC7"/>
    </source>
</evidence>
<evidence type="ECO:0000255" key="3">
    <source>
        <dbReference type="PROSITE-ProRule" id="PRU00045"/>
    </source>
</evidence>
<evidence type="ECO:0000255" key="4">
    <source>
        <dbReference type="PROSITE-ProRule" id="PRU10092"/>
    </source>
</evidence>
<evidence type="ECO:0000256" key="5">
    <source>
        <dbReference type="SAM" id="MobiDB-lite"/>
    </source>
</evidence>
<evidence type="ECO:0000305" key="6"/>
<evidence type="ECO:0007744" key="7">
    <source>
    </source>
</evidence>
<dbReference type="EC" id="3.4.19.12" evidence="2"/>
<dbReference type="EMBL" id="BC082001">
    <property type="protein sequence ID" value="AAH82001.1"/>
    <property type="molecule type" value="mRNA"/>
</dbReference>
<dbReference type="RefSeq" id="NP_001017380.1">
    <property type="nucleotide sequence ID" value="NM_001017380.1"/>
</dbReference>
<dbReference type="RefSeq" id="XP_063134154.1">
    <property type="nucleotide sequence ID" value="XM_063278084.1"/>
</dbReference>
<dbReference type="RefSeq" id="XP_063134155.1">
    <property type="nucleotide sequence ID" value="XM_063278085.1"/>
</dbReference>
<dbReference type="RefSeq" id="XP_063134156.1">
    <property type="nucleotide sequence ID" value="XM_063278086.1"/>
</dbReference>
<dbReference type="RefSeq" id="XP_063134157.1">
    <property type="nucleotide sequence ID" value="XM_063278087.1"/>
</dbReference>
<dbReference type="RefSeq" id="XP_063134158.1">
    <property type="nucleotide sequence ID" value="XM_063278088.1"/>
</dbReference>
<dbReference type="RefSeq" id="XP_063134160.1">
    <property type="nucleotide sequence ID" value="XM_063278090.1"/>
</dbReference>
<dbReference type="RefSeq" id="XP_063134161.1">
    <property type="nucleotide sequence ID" value="XM_063278091.1"/>
</dbReference>
<dbReference type="RefSeq" id="XP_063134162.1">
    <property type="nucleotide sequence ID" value="XM_063278092.1"/>
</dbReference>
<dbReference type="RefSeq" id="XP_063134163.1">
    <property type="nucleotide sequence ID" value="XM_063278093.1"/>
</dbReference>
<dbReference type="RefSeq" id="XP_063134164.1">
    <property type="nucleotide sequence ID" value="XM_063278094.1"/>
</dbReference>
<dbReference type="SMR" id="Q66H62"/>
<dbReference type="BioGRID" id="260280">
    <property type="interactions" value="3"/>
</dbReference>
<dbReference type="FunCoup" id="Q66H62">
    <property type="interactions" value="3449"/>
</dbReference>
<dbReference type="STRING" id="10116.ENSRNOP00000018888"/>
<dbReference type="MEROPS" id="C67.001"/>
<dbReference type="iPTMnet" id="Q66H62"/>
<dbReference type="PhosphoSitePlus" id="Q66H62"/>
<dbReference type="PaxDb" id="10116-ENSRNOP00000018888"/>
<dbReference type="GeneID" id="312937"/>
<dbReference type="KEGG" id="rno:312937"/>
<dbReference type="AGR" id="RGD:1308346"/>
<dbReference type="CTD" id="1540"/>
<dbReference type="RGD" id="1308346">
    <property type="gene designation" value="Cyld"/>
</dbReference>
<dbReference type="eggNOG" id="KOG3556">
    <property type="taxonomic scope" value="Eukaryota"/>
</dbReference>
<dbReference type="InParanoid" id="Q66H62"/>
<dbReference type="OrthoDB" id="6287070at2759"/>
<dbReference type="PhylomeDB" id="Q66H62"/>
<dbReference type="Reactome" id="R-RNO-168638">
    <property type="pathway name" value="NOD1/2 Signaling Pathway"/>
</dbReference>
<dbReference type="Reactome" id="R-RNO-5357786">
    <property type="pathway name" value="TNFR1-induced proapoptotic signaling"/>
</dbReference>
<dbReference type="Reactome" id="R-RNO-5357905">
    <property type="pathway name" value="Regulation of TNFR1 signaling"/>
</dbReference>
<dbReference type="Reactome" id="R-RNO-5357956">
    <property type="pathway name" value="TNFR1-induced NF-kappa-B signaling pathway"/>
</dbReference>
<dbReference type="Reactome" id="R-RNO-5689880">
    <property type="pathway name" value="Ub-specific processing proteases"/>
</dbReference>
<dbReference type="Reactome" id="R-RNO-936440">
    <property type="pathway name" value="Negative regulators of DDX58/IFIH1 signaling"/>
</dbReference>
<dbReference type="PRO" id="PR:Q66H62"/>
<dbReference type="Proteomes" id="UP000002494">
    <property type="component" value="Unplaced"/>
</dbReference>
<dbReference type="GO" id="GO:0005813">
    <property type="term" value="C:centrosome"/>
    <property type="evidence" value="ECO:0000250"/>
    <property type="project" value="UniProtKB"/>
</dbReference>
<dbReference type="GO" id="GO:0036064">
    <property type="term" value="C:ciliary basal body"/>
    <property type="evidence" value="ECO:0000250"/>
    <property type="project" value="UniProtKB"/>
</dbReference>
<dbReference type="GO" id="GO:0097542">
    <property type="term" value="C:ciliary tip"/>
    <property type="evidence" value="ECO:0000250"/>
    <property type="project" value="UniProtKB"/>
</dbReference>
<dbReference type="GO" id="GO:0005881">
    <property type="term" value="C:cytoplasmic microtubule"/>
    <property type="evidence" value="ECO:0000266"/>
    <property type="project" value="RGD"/>
</dbReference>
<dbReference type="GO" id="GO:0009898">
    <property type="term" value="C:cytoplasmic side of plasma membrane"/>
    <property type="evidence" value="ECO:0000266"/>
    <property type="project" value="RGD"/>
</dbReference>
<dbReference type="GO" id="GO:0005829">
    <property type="term" value="C:cytosol"/>
    <property type="evidence" value="ECO:0000250"/>
    <property type="project" value="UniProtKB"/>
</dbReference>
<dbReference type="GO" id="GO:0098978">
    <property type="term" value="C:glutamatergic synapse"/>
    <property type="evidence" value="ECO:0000314"/>
    <property type="project" value="SynGO"/>
</dbReference>
<dbReference type="GO" id="GO:0030496">
    <property type="term" value="C:midbody"/>
    <property type="evidence" value="ECO:0000266"/>
    <property type="project" value="RGD"/>
</dbReference>
<dbReference type="GO" id="GO:0048471">
    <property type="term" value="C:perinuclear region of cytoplasm"/>
    <property type="evidence" value="ECO:0007669"/>
    <property type="project" value="UniProtKB-SubCell"/>
</dbReference>
<dbReference type="GO" id="GO:0014069">
    <property type="term" value="C:postsynaptic density"/>
    <property type="evidence" value="ECO:0000314"/>
    <property type="project" value="SynGO"/>
</dbReference>
<dbReference type="GO" id="GO:0005819">
    <property type="term" value="C:spindle"/>
    <property type="evidence" value="ECO:0000250"/>
    <property type="project" value="UniProtKB"/>
</dbReference>
<dbReference type="GO" id="GO:0004843">
    <property type="term" value="F:cysteine-type deubiquitinase activity"/>
    <property type="evidence" value="ECO:0000250"/>
    <property type="project" value="UniProtKB"/>
</dbReference>
<dbReference type="GO" id="GO:1990380">
    <property type="term" value="F:K48-linked deubiquitinase activity"/>
    <property type="evidence" value="ECO:0000266"/>
    <property type="project" value="RGD"/>
</dbReference>
<dbReference type="GO" id="GO:0061578">
    <property type="term" value="F:K63-linked deubiquitinase activity"/>
    <property type="evidence" value="ECO:0000250"/>
    <property type="project" value="UniProtKB"/>
</dbReference>
<dbReference type="GO" id="GO:0061815">
    <property type="term" value="F:Met1-linked polyubiquitin deubiquitinase activity"/>
    <property type="evidence" value="ECO:0000266"/>
    <property type="project" value="RGD"/>
</dbReference>
<dbReference type="GO" id="GO:0070064">
    <property type="term" value="F:proline-rich region binding"/>
    <property type="evidence" value="ECO:0000266"/>
    <property type="project" value="RGD"/>
</dbReference>
<dbReference type="GO" id="GO:0019901">
    <property type="term" value="F:protein kinase binding"/>
    <property type="evidence" value="ECO:0000266"/>
    <property type="project" value="RGD"/>
</dbReference>
<dbReference type="GO" id="GO:0008270">
    <property type="term" value="F:zinc ion binding"/>
    <property type="evidence" value="ECO:0000250"/>
    <property type="project" value="UniProtKB"/>
</dbReference>
<dbReference type="GO" id="GO:0043369">
    <property type="term" value="P:CD4-positive or CD8-positive, alpha-beta T cell lineage commitment"/>
    <property type="evidence" value="ECO:0000266"/>
    <property type="project" value="RGD"/>
</dbReference>
<dbReference type="GO" id="GO:0048872">
    <property type="term" value="P:homeostasis of number of cells"/>
    <property type="evidence" value="ECO:0000266"/>
    <property type="project" value="RGD"/>
</dbReference>
<dbReference type="GO" id="GO:0045087">
    <property type="term" value="P:innate immune response"/>
    <property type="evidence" value="ECO:0000250"/>
    <property type="project" value="UniProtKB"/>
</dbReference>
<dbReference type="GO" id="GO:0070266">
    <property type="term" value="P:necroptotic process"/>
    <property type="evidence" value="ECO:0000266"/>
    <property type="project" value="RGD"/>
</dbReference>
<dbReference type="GO" id="GO:0043124">
    <property type="term" value="P:negative regulation of canonical NF-kappaB signal transduction"/>
    <property type="evidence" value="ECO:0000250"/>
    <property type="project" value="UniProtKB"/>
</dbReference>
<dbReference type="GO" id="GO:0090090">
    <property type="term" value="P:negative regulation of canonical Wnt signaling pathway"/>
    <property type="evidence" value="ECO:0000250"/>
    <property type="project" value="UniProtKB"/>
</dbReference>
<dbReference type="GO" id="GO:0050728">
    <property type="term" value="P:negative regulation of inflammatory response"/>
    <property type="evidence" value="ECO:0000250"/>
    <property type="project" value="UniProtKB"/>
</dbReference>
<dbReference type="GO" id="GO:2000493">
    <property type="term" value="P:negative regulation of interleukin-18-mediated signaling pathway"/>
    <property type="evidence" value="ECO:0000250"/>
    <property type="project" value="UniProtKB"/>
</dbReference>
<dbReference type="GO" id="GO:0046329">
    <property type="term" value="P:negative regulation of JNK cascade"/>
    <property type="evidence" value="ECO:0000250"/>
    <property type="project" value="UniProtKB"/>
</dbReference>
<dbReference type="GO" id="GO:0032088">
    <property type="term" value="P:negative regulation of NF-kappaB transcription factor activity"/>
    <property type="evidence" value="ECO:0000250"/>
    <property type="project" value="UniProtKB"/>
</dbReference>
<dbReference type="GO" id="GO:1901223">
    <property type="term" value="P:negative regulation of non-canonical NF-kappaB signal transduction"/>
    <property type="evidence" value="ECO:0000250"/>
    <property type="project" value="UniProtKB"/>
</dbReference>
<dbReference type="GO" id="GO:1903753">
    <property type="term" value="P:negative regulation of p38MAPK cascade"/>
    <property type="evidence" value="ECO:0000250"/>
    <property type="project" value="UniProtKB"/>
</dbReference>
<dbReference type="GO" id="GO:2001238">
    <property type="term" value="P:positive regulation of extrinsic apoptotic signaling pathway"/>
    <property type="evidence" value="ECO:0000266"/>
    <property type="project" value="RGD"/>
</dbReference>
<dbReference type="GO" id="GO:1903829">
    <property type="term" value="P:positive regulation of protein localization"/>
    <property type="evidence" value="ECO:0000266"/>
    <property type="project" value="RGD"/>
</dbReference>
<dbReference type="GO" id="GO:0045582">
    <property type="term" value="P:positive regulation of T cell differentiation"/>
    <property type="evidence" value="ECO:0000266"/>
    <property type="project" value="RGD"/>
</dbReference>
<dbReference type="GO" id="GO:0050862">
    <property type="term" value="P:positive regulation of T cell receptor signaling pathway"/>
    <property type="evidence" value="ECO:0000266"/>
    <property type="project" value="RGD"/>
</dbReference>
<dbReference type="GO" id="GO:0016579">
    <property type="term" value="P:protein deubiquitination"/>
    <property type="evidence" value="ECO:0000250"/>
    <property type="project" value="UniProtKB"/>
</dbReference>
<dbReference type="GO" id="GO:0070536">
    <property type="term" value="P:protein K63-linked deubiquitination"/>
    <property type="evidence" value="ECO:0000266"/>
    <property type="project" value="RGD"/>
</dbReference>
<dbReference type="GO" id="GO:1990108">
    <property type="term" value="P:protein linear deubiquitination"/>
    <property type="evidence" value="ECO:0000250"/>
    <property type="project" value="UniProtKB"/>
</dbReference>
<dbReference type="GO" id="GO:0006508">
    <property type="term" value="P:proteolysis"/>
    <property type="evidence" value="ECO:0007669"/>
    <property type="project" value="UniProtKB-KW"/>
</dbReference>
<dbReference type="GO" id="GO:0045577">
    <property type="term" value="P:regulation of B cell differentiation"/>
    <property type="evidence" value="ECO:0000266"/>
    <property type="project" value="RGD"/>
</dbReference>
<dbReference type="GO" id="GO:1902017">
    <property type="term" value="P:regulation of cilium assembly"/>
    <property type="evidence" value="ECO:0000250"/>
    <property type="project" value="UniProtKB"/>
</dbReference>
<dbReference type="GO" id="GO:0050727">
    <property type="term" value="P:regulation of inflammatory response"/>
    <property type="evidence" value="ECO:0000250"/>
    <property type="project" value="UniProtKB"/>
</dbReference>
<dbReference type="GO" id="GO:2001242">
    <property type="term" value="P:regulation of intrinsic apoptotic signaling pathway"/>
    <property type="evidence" value="ECO:0000266"/>
    <property type="project" value="RGD"/>
</dbReference>
<dbReference type="GO" id="GO:0070507">
    <property type="term" value="P:regulation of microtubule cytoskeleton organization"/>
    <property type="evidence" value="ECO:0000266"/>
    <property type="project" value="RGD"/>
</dbReference>
<dbReference type="GO" id="GO:0007346">
    <property type="term" value="P:regulation of mitotic cell cycle"/>
    <property type="evidence" value="ECO:0000266"/>
    <property type="project" value="RGD"/>
</dbReference>
<dbReference type="GO" id="GO:0060544">
    <property type="term" value="P:regulation of necroptotic process"/>
    <property type="evidence" value="ECO:0000266"/>
    <property type="project" value="RGD"/>
</dbReference>
<dbReference type="GO" id="GO:0098696">
    <property type="term" value="P:regulation of neurotransmitter receptor localization to postsynaptic specialization membrane"/>
    <property type="evidence" value="ECO:0000314"/>
    <property type="project" value="SynGO"/>
</dbReference>
<dbReference type="GO" id="GO:0010803">
    <property type="term" value="P:regulation of tumor necrosis factor-mediated signaling pathway"/>
    <property type="evidence" value="ECO:0000250"/>
    <property type="project" value="UniProtKB"/>
</dbReference>
<dbReference type="GO" id="GO:0140252">
    <property type="term" value="P:regulation protein catabolic process at postsynapse"/>
    <property type="evidence" value="ECO:0000314"/>
    <property type="project" value="SynGO"/>
</dbReference>
<dbReference type="GO" id="GO:1901026">
    <property type="term" value="P:ripoptosome assembly involved in necroptotic process"/>
    <property type="evidence" value="ECO:0000266"/>
    <property type="project" value="RGD"/>
</dbReference>
<dbReference type="GO" id="GO:0016055">
    <property type="term" value="P:Wnt signaling pathway"/>
    <property type="evidence" value="ECO:0007669"/>
    <property type="project" value="UniProtKB-KW"/>
</dbReference>
<dbReference type="CDD" id="cd02670">
    <property type="entry name" value="Peptidase_C19N"/>
    <property type="match status" value="1"/>
</dbReference>
<dbReference type="FunFam" id="2.30.30.190:FF:000004">
    <property type="entry name" value="Putative ubiquitin carboxyl-terminal hydrolase CYLD"/>
    <property type="match status" value="1"/>
</dbReference>
<dbReference type="FunFam" id="2.30.30.190:FF:000006">
    <property type="entry name" value="Putative ubiquitin carboxyl-terminal hydrolase CYLD"/>
    <property type="match status" value="1"/>
</dbReference>
<dbReference type="FunFam" id="2.30.30.190:FF:000007">
    <property type="entry name" value="Putative ubiquitin carboxyl-terminal hydrolase CYLD"/>
    <property type="match status" value="1"/>
</dbReference>
<dbReference type="FunFam" id="3.90.70.10:FF:000009">
    <property type="entry name" value="Putative ubiquitin carboxyl-terminal hydrolase CYLD"/>
    <property type="match status" value="1"/>
</dbReference>
<dbReference type="Gene3D" id="2.30.30.190">
    <property type="entry name" value="CAP Gly-rich-like domain"/>
    <property type="match status" value="3"/>
</dbReference>
<dbReference type="Gene3D" id="3.90.70.10">
    <property type="entry name" value="Cysteine proteinases"/>
    <property type="match status" value="1"/>
</dbReference>
<dbReference type="InterPro" id="IPR036859">
    <property type="entry name" value="CAP-Gly_dom_sf"/>
</dbReference>
<dbReference type="InterPro" id="IPR000938">
    <property type="entry name" value="CAP-Gly_domain"/>
</dbReference>
<dbReference type="InterPro" id="IPR038765">
    <property type="entry name" value="Papain-like_cys_pep_sf"/>
</dbReference>
<dbReference type="InterPro" id="IPR001394">
    <property type="entry name" value="Peptidase_C19_UCH"/>
</dbReference>
<dbReference type="InterPro" id="IPR018200">
    <property type="entry name" value="USP_CS"/>
</dbReference>
<dbReference type="InterPro" id="IPR028889">
    <property type="entry name" value="USP_dom"/>
</dbReference>
<dbReference type="PANTHER" id="PTHR11830">
    <property type="entry name" value="40S RIBOSOMAL PROTEIN S3A"/>
    <property type="match status" value="1"/>
</dbReference>
<dbReference type="Pfam" id="PF01302">
    <property type="entry name" value="CAP_GLY"/>
    <property type="match status" value="2"/>
</dbReference>
<dbReference type="Pfam" id="PF16607">
    <property type="entry name" value="CYLD_phos_site"/>
    <property type="match status" value="1"/>
</dbReference>
<dbReference type="Pfam" id="PF00443">
    <property type="entry name" value="UCH"/>
    <property type="match status" value="1"/>
</dbReference>
<dbReference type="SMART" id="SM01052">
    <property type="entry name" value="CAP_GLY"/>
    <property type="match status" value="3"/>
</dbReference>
<dbReference type="SUPFAM" id="SSF74924">
    <property type="entry name" value="Cap-Gly domain"/>
    <property type="match status" value="3"/>
</dbReference>
<dbReference type="SUPFAM" id="SSF54001">
    <property type="entry name" value="Cysteine proteinases"/>
    <property type="match status" value="1"/>
</dbReference>
<dbReference type="PROSITE" id="PS00845">
    <property type="entry name" value="CAP_GLY_1"/>
    <property type="match status" value="1"/>
</dbReference>
<dbReference type="PROSITE" id="PS50245">
    <property type="entry name" value="CAP_GLY_2"/>
    <property type="match status" value="2"/>
</dbReference>
<dbReference type="PROSITE" id="PS00972">
    <property type="entry name" value="USP_1"/>
    <property type="match status" value="1"/>
</dbReference>
<dbReference type="PROSITE" id="PS50235">
    <property type="entry name" value="USP_3"/>
    <property type="match status" value="1"/>
</dbReference>
<reference key="1">
    <citation type="journal article" date="2004" name="Genome Res.">
        <title>The status, quality, and expansion of the NIH full-length cDNA project: the Mammalian Gene Collection (MGC).</title>
        <authorList>
            <consortium name="The MGC Project Team"/>
        </authorList>
    </citation>
    <scope>NUCLEOTIDE SEQUENCE [LARGE SCALE MRNA]</scope>
    <source>
        <tissue>Testis</tissue>
    </source>
</reference>
<reference key="2">
    <citation type="journal article" date="2012" name="Nat. Commun.">
        <title>Quantitative maps of protein phosphorylation sites across 14 different rat organs and tissues.</title>
        <authorList>
            <person name="Lundby A."/>
            <person name="Secher A."/>
            <person name="Lage K."/>
            <person name="Nordsborg N.B."/>
            <person name="Dmytriyev A."/>
            <person name="Lundby C."/>
            <person name="Olsen J.V."/>
        </authorList>
    </citation>
    <scope>PHOSPHORYLATION [LARGE SCALE ANALYSIS] AT SER-415 AND SER-419</scope>
    <scope>IDENTIFICATION BY MASS SPECTROMETRY [LARGE SCALE ANALYSIS]</scope>
</reference>
<name>CYLD_RAT</name>
<organism>
    <name type="scientific">Rattus norvegicus</name>
    <name type="common">Rat</name>
    <dbReference type="NCBI Taxonomy" id="10116"/>
    <lineage>
        <taxon>Eukaryota</taxon>
        <taxon>Metazoa</taxon>
        <taxon>Chordata</taxon>
        <taxon>Craniata</taxon>
        <taxon>Vertebrata</taxon>
        <taxon>Euteleostomi</taxon>
        <taxon>Mammalia</taxon>
        <taxon>Eutheria</taxon>
        <taxon>Euarchontoglires</taxon>
        <taxon>Glires</taxon>
        <taxon>Rodentia</taxon>
        <taxon>Myomorpha</taxon>
        <taxon>Muroidea</taxon>
        <taxon>Muridae</taxon>
        <taxon>Murinae</taxon>
        <taxon>Rattus</taxon>
    </lineage>
</organism>
<accession>Q66H62</accession>